<proteinExistence type="inferred from homology"/>
<feature type="chain" id="PRO_1000023157" description="Thymidylate kinase">
    <location>
        <begin position="1"/>
        <end position="206"/>
    </location>
</feature>
<feature type="binding site" evidence="1">
    <location>
        <begin position="11"/>
        <end position="18"/>
    </location>
    <ligand>
        <name>ATP</name>
        <dbReference type="ChEBI" id="CHEBI:30616"/>
    </ligand>
</feature>
<keyword id="KW-0067">ATP-binding</keyword>
<keyword id="KW-0418">Kinase</keyword>
<keyword id="KW-0545">Nucleotide biosynthesis</keyword>
<keyword id="KW-0547">Nucleotide-binding</keyword>
<keyword id="KW-0808">Transferase</keyword>
<comment type="function">
    <text evidence="1">Phosphorylation of dTMP to form dTDP in both de novo and salvage pathways of dTTP synthesis.</text>
</comment>
<comment type="catalytic activity">
    <reaction evidence="1">
        <text>dTMP + ATP = dTDP + ADP</text>
        <dbReference type="Rhea" id="RHEA:13517"/>
        <dbReference type="ChEBI" id="CHEBI:30616"/>
        <dbReference type="ChEBI" id="CHEBI:58369"/>
        <dbReference type="ChEBI" id="CHEBI:63528"/>
        <dbReference type="ChEBI" id="CHEBI:456216"/>
        <dbReference type="EC" id="2.7.4.9"/>
    </reaction>
</comment>
<comment type="similarity">
    <text evidence="1">Belongs to the thymidylate kinase family.</text>
</comment>
<evidence type="ECO:0000255" key="1">
    <source>
        <dbReference type="HAMAP-Rule" id="MF_00165"/>
    </source>
</evidence>
<name>KTHY_BURCM</name>
<protein>
    <recommendedName>
        <fullName evidence="1">Thymidylate kinase</fullName>
        <ecNumber evidence="1">2.7.4.9</ecNumber>
    </recommendedName>
    <alternativeName>
        <fullName evidence="1">dTMP kinase</fullName>
    </alternativeName>
</protein>
<reference key="1">
    <citation type="submission" date="2006-08" db="EMBL/GenBank/DDBJ databases">
        <title>Complete sequence of chromosome 1 of Burkholderia cepacia AMMD.</title>
        <authorList>
            <person name="Copeland A."/>
            <person name="Lucas S."/>
            <person name="Lapidus A."/>
            <person name="Barry K."/>
            <person name="Detter J.C."/>
            <person name="Glavina del Rio T."/>
            <person name="Hammon N."/>
            <person name="Israni S."/>
            <person name="Pitluck S."/>
            <person name="Bruce D."/>
            <person name="Chain P."/>
            <person name="Malfatti S."/>
            <person name="Shin M."/>
            <person name="Vergez L."/>
            <person name="Schmutz J."/>
            <person name="Larimer F."/>
            <person name="Land M."/>
            <person name="Hauser L."/>
            <person name="Kyrpides N."/>
            <person name="Kim E."/>
            <person name="Parke J."/>
            <person name="Coenye T."/>
            <person name="Konstantinidis K."/>
            <person name="Ramette A."/>
            <person name="Tiedje J."/>
            <person name="Richardson P."/>
        </authorList>
    </citation>
    <scope>NUCLEOTIDE SEQUENCE [LARGE SCALE GENOMIC DNA]</scope>
    <source>
        <strain>ATCC BAA-244 / DSM 16087 / CCUG 44356 / LMG 19182 / AMMD</strain>
    </source>
</reference>
<dbReference type="EC" id="2.7.4.9" evidence="1"/>
<dbReference type="EMBL" id="CP000440">
    <property type="protein sequence ID" value="ABI87386.1"/>
    <property type="molecule type" value="Genomic_DNA"/>
</dbReference>
<dbReference type="RefSeq" id="WP_011657084.1">
    <property type="nucleotide sequence ID" value="NZ_CP009798.1"/>
</dbReference>
<dbReference type="SMR" id="Q0BEN7"/>
<dbReference type="GeneID" id="93085964"/>
<dbReference type="KEGG" id="bam:Bamb_1830"/>
<dbReference type="PATRIC" id="fig|339670.21.peg.3127"/>
<dbReference type="eggNOG" id="COG0125">
    <property type="taxonomic scope" value="Bacteria"/>
</dbReference>
<dbReference type="Proteomes" id="UP000000662">
    <property type="component" value="Chromosome 1"/>
</dbReference>
<dbReference type="GO" id="GO:0005829">
    <property type="term" value="C:cytosol"/>
    <property type="evidence" value="ECO:0007669"/>
    <property type="project" value="TreeGrafter"/>
</dbReference>
<dbReference type="GO" id="GO:0005524">
    <property type="term" value="F:ATP binding"/>
    <property type="evidence" value="ECO:0007669"/>
    <property type="project" value="UniProtKB-UniRule"/>
</dbReference>
<dbReference type="GO" id="GO:0004798">
    <property type="term" value="F:dTMP kinase activity"/>
    <property type="evidence" value="ECO:0007669"/>
    <property type="project" value="UniProtKB-UniRule"/>
</dbReference>
<dbReference type="GO" id="GO:0006233">
    <property type="term" value="P:dTDP biosynthetic process"/>
    <property type="evidence" value="ECO:0007669"/>
    <property type="project" value="InterPro"/>
</dbReference>
<dbReference type="GO" id="GO:0006235">
    <property type="term" value="P:dTTP biosynthetic process"/>
    <property type="evidence" value="ECO:0007669"/>
    <property type="project" value="UniProtKB-UniRule"/>
</dbReference>
<dbReference type="GO" id="GO:0006227">
    <property type="term" value="P:dUDP biosynthetic process"/>
    <property type="evidence" value="ECO:0007669"/>
    <property type="project" value="TreeGrafter"/>
</dbReference>
<dbReference type="CDD" id="cd01672">
    <property type="entry name" value="TMPK"/>
    <property type="match status" value="1"/>
</dbReference>
<dbReference type="FunFam" id="3.40.50.300:FF:000225">
    <property type="entry name" value="Thymidylate kinase"/>
    <property type="match status" value="1"/>
</dbReference>
<dbReference type="Gene3D" id="3.40.50.300">
    <property type="entry name" value="P-loop containing nucleotide triphosphate hydrolases"/>
    <property type="match status" value="1"/>
</dbReference>
<dbReference type="HAMAP" id="MF_00165">
    <property type="entry name" value="Thymidylate_kinase"/>
    <property type="match status" value="1"/>
</dbReference>
<dbReference type="InterPro" id="IPR027417">
    <property type="entry name" value="P-loop_NTPase"/>
</dbReference>
<dbReference type="InterPro" id="IPR039430">
    <property type="entry name" value="Thymidylate_kin-like_dom"/>
</dbReference>
<dbReference type="InterPro" id="IPR018094">
    <property type="entry name" value="Thymidylate_kinase"/>
</dbReference>
<dbReference type="NCBIfam" id="TIGR00041">
    <property type="entry name" value="DTMP_kinase"/>
    <property type="match status" value="1"/>
</dbReference>
<dbReference type="PANTHER" id="PTHR10344">
    <property type="entry name" value="THYMIDYLATE KINASE"/>
    <property type="match status" value="1"/>
</dbReference>
<dbReference type="PANTHER" id="PTHR10344:SF4">
    <property type="entry name" value="UMP-CMP KINASE 2, MITOCHONDRIAL"/>
    <property type="match status" value="1"/>
</dbReference>
<dbReference type="Pfam" id="PF02223">
    <property type="entry name" value="Thymidylate_kin"/>
    <property type="match status" value="1"/>
</dbReference>
<dbReference type="SUPFAM" id="SSF52540">
    <property type="entry name" value="P-loop containing nucleoside triphosphate hydrolases"/>
    <property type="match status" value="1"/>
</dbReference>
<gene>
    <name evidence="1" type="primary">tmk</name>
    <name type="ordered locus">Bamb_1830</name>
</gene>
<sequence>MASGKFITFEGIDGAGKTTHLQWFCERLQAKLAAGGRQVVVTREPGGTQLGEKLREILLNQPMDLETEALLMFAARREHLALVIEPALARGDWVVSDRFTDATFAYQGGGRGLPRDKLETLERWVQGGFQPDLTVLFDVAPQVASERRGAVRMPDKFESESDAFFSRTRGEYLRRAEEAPHRFAIVDATQSIPEIRQQLERVLAAL</sequence>
<accession>Q0BEN7</accession>
<organism>
    <name type="scientific">Burkholderia ambifaria (strain ATCC BAA-244 / DSM 16087 / CCUG 44356 / LMG 19182 / AMMD)</name>
    <name type="common">Burkholderia cepacia (strain AMMD)</name>
    <dbReference type="NCBI Taxonomy" id="339670"/>
    <lineage>
        <taxon>Bacteria</taxon>
        <taxon>Pseudomonadati</taxon>
        <taxon>Pseudomonadota</taxon>
        <taxon>Betaproteobacteria</taxon>
        <taxon>Burkholderiales</taxon>
        <taxon>Burkholderiaceae</taxon>
        <taxon>Burkholderia</taxon>
        <taxon>Burkholderia cepacia complex</taxon>
    </lineage>
</organism>